<comment type="function">
    <text evidence="1">Formation of pseudouridine at positions 38, 39 and 40 in the anticodon stem and loop of transfer RNAs.</text>
</comment>
<comment type="catalytic activity">
    <reaction evidence="1">
        <text>uridine(38/39/40) in tRNA = pseudouridine(38/39/40) in tRNA</text>
        <dbReference type="Rhea" id="RHEA:22376"/>
        <dbReference type="Rhea" id="RHEA-COMP:10085"/>
        <dbReference type="Rhea" id="RHEA-COMP:10087"/>
        <dbReference type="ChEBI" id="CHEBI:65314"/>
        <dbReference type="ChEBI" id="CHEBI:65315"/>
        <dbReference type="EC" id="5.4.99.12"/>
    </reaction>
</comment>
<comment type="subunit">
    <text evidence="1">Homodimer.</text>
</comment>
<comment type="similarity">
    <text evidence="1">Belongs to the tRNA pseudouridine synthase TruA family.</text>
</comment>
<name>TRUA_SHESH</name>
<sequence>MRVALGIEYDGRQYFGWQRQAEVDSVQAQLERALSKVANEPIRVHCAGRTDAGVHATGQVVHFETNAIRKDSAWTLGVNVNLPDDIAVRWVKIVDDEFHARFSATARRYRYMIYNYDFRPGILRSGVSHYRGNIDADIMHQAAQQFVGEHDFTSFRALHCQSKTPFRSVHEVNVTRQGMYICVDIKANAFLHHMVRNIVGTLLEIGLGNQRPEWIPQLLDLKDRSQAAPTAKPNGLYMVDVTYPERYELPKLALGPLFMLD</sequence>
<proteinExistence type="inferred from homology"/>
<reference key="1">
    <citation type="submission" date="2007-08" db="EMBL/GenBank/DDBJ databases">
        <title>Complete sequence of Shewanella sediminis HAW-EB3.</title>
        <authorList>
            <consortium name="US DOE Joint Genome Institute"/>
            <person name="Copeland A."/>
            <person name="Lucas S."/>
            <person name="Lapidus A."/>
            <person name="Barry K."/>
            <person name="Glavina del Rio T."/>
            <person name="Dalin E."/>
            <person name="Tice H."/>
            <person name="Pitluck S."/>
            <person name="Chertkov O."/>
            <person name="Brettin T."/>
            <person name="Bruce D."/>
            <person name="Detter J.C."/>
            <person name="Han C."/>
            <person name="Schmutz J."/>
            <person name="Larimer F."/>
            <person name="Land M."/>
            <person name="Hauser L."/>
            <person name="Kyrpides N."/>
            <person name="Kim E."/>
            <person name="Zhao J.-S."/>
            <person name="Richardson P."/>
        </authorList>
    </citation>
    <scope>NUCLEOTIDE SEQUENCE [LARGE SCALE GENOMIC DNA]</scope>
    <source>
        <strain>HAW-EB3</strain>
    </source>
</reference>
<accession>A8FTU0</accession>
<organism>
    <name type="scientific">Shewanella sediminis (strain HAW-EB3)</name>
    <dbReference type="NCBI Taxonomy" id="425104"/>
    <lineage>
        <taxon>Bacteria</taxon>
        <taxon>Pseudomonadati</taxon>
        <taxon>Pseudomonadota</taxon>
        <taxon>Gammaproteobacteria</taxon>
        <taxon>Alteromonadales</taxon>
        <taxon>Shewanellaceae</taxon>
        <taxon>Shewanella</taxon>
    </lineage>
</organism>
<gene>
    <name evidence="1" type="primary">truA</name>
    <name type="ordered locus">Ssed_1652</name>
</gene>
<feature type="chain" id="PRO_1000077104" description="tRNA pseudouridine synthase A">
    <location>
        <begin position="1"/>
        <end position="261"/>
    </location>
</feature>
<feature type="active site" description="Nucleophile" evidence="1">
    <location>
        <position position="51"/>
    </location>
</feature>
<feature type="binding site" evidence="1">
    <location>
        <position position="109"/>
    </location>
    <ligand>
        <name>substrate</name>
    </ligand>
</feature>
<dbReference type="EC" id="5.4.99.12" evidence="1"/>
<dbReference type="EMBL" id="CP000821">
    <property type="protein sequence ID" value="ABV36263.1"/>
    <property type="molecule type" value="Genomic_DNA"/>
</dbReference>
<dbReference type="RefSeq" id="WP_012141999.1">
    <property type="nucleotide sequence ID" value="NC_009831.1"/>
</dbReference>
<dbReference type="SMR" id="A8FTU0"/>
<dbReference type="STRING" id="425104.Ssed_1652"/>
<dbReference type="KEGG" id="sse:Ssed_1652"/>
<dbReference type="eggNOG" id="COG0101">
    <property type="taxonomic scope" value="Bacteria"/>
</dbReference>
<dbReference type="HOGENOM" id="CLU_014673_0_2_6"/>
<dbReference type="OrthoDB" id="9811823at2"/>
<dbReference type="Proteomes" id="UP000002015">
    <property type="component" value="Chromosome"/>
</dbReference>
<dbReference type="GO" id="GO:0003723">
    <property type="term" value="F:RNA binding"/>
    <property type="evidence" value="ECO:0007669"/>
    <property type="project" value="InterPro"/>
</dbReference>
<dbReference type="GO" id="GO:0160147">
    <property type="term" value="F:tRNA pseudouridine(38-40) synthase activity"/>
    <property type="evidence" value="ECO:0007669"/>
    <property type="project" value="UniProtKB-EC"/>
</dbReference>
<dbReference type="GO" id="GO:0031119">
    <property type="term" value="P:tRNA pseudouridine synthesis"/>
    <property type="evidence" value="ECO:0007669"/>
    <property type="project" value="UniProtKB-UniRule"/>
</dbReference>
<dbReference type="CDD" id="cd02570">
    <property type="entry name" value="PseudoU_synth_EcTruA"/>
    <property type="match status" value="1"/>
</dbReference>
<dbReference type="FunFam" id="3.30.70.580:FF:000001">
    <property type="entry name" value="tRNA pseudouridine synthase A"/>
    <property type="match status" value="1"/>
</dbReference>
<dbReference type="Gene3D" id="3.30.70.660">
    <property type="entry name" value="Pseudouridine synthase I, catalytic domain, C-terminal subdomain"/>
    <property type="match status" value="1"/>
</dbReference>
<dbReference type="Gene3D" id="3.30.70.580">
    <property type="entry name" value="Pseudouridine synthase I, catalytic domain, N-terminal subdomain"/>
    <property type="match status" value="1"/>
</dbReference>
<dbReference type="HAMAP" id="MF_00171">
    <property type="entry name" value="TruA"/>
    <property type="match status" value="1"/>
</dbReference>
<dbReference type="InterPro" id="IPR020103">
    <property type="entry name" value="PsdUridine_synth_cat_dom_sf"/>
</dbReference>
<dbReference type="InterPro" id="IPR001406">
    <property type="entry name" value="PsdUridine_synth_TruA"/>
</dbReference>
<dbReference type="InterPro" id="IPR020097">
    <property type="entry name" value="PsdUridine_synth_TruA_a/b_dom"/>
</dbReference>
<dbReference type="InterPro" id="IPR020095">
    <property type="entry name" value="PsdUridine_synth_TruA_C"/>
</dbReference>
<dbReference type="InterPro" id="IPR020094">
    <property type="entry name" value="TruA/RsuA/RluB/E/F_N"/>
</dbReference>
<dbReference type="NCBIfam" id="TIGR00071">
    <property type="entry name" value="hisT_truA"/>
    <property type="match status" value="1"/>
</dbReference>
<dbReference type="PANTHER" id="PTHR11142">
    <property type="entry name" value="PSEUDOURIDYLATE SYNTHASE"/>
    <property type="match status" value="1"/>
</dbReference>
<dbReference type="PANTHER" id="PTHR11142:SF0">
    <property type="entry name" value="TRNA PSEUDOURIDINE SYNTHASE-LIKE 1"/>
    <property type="match status" value="1"/>
</dbReference>
<dbReference type="Pfam" id="PF01416">
    <property type="entry name" value="PseudoU_synth_1"/>
    <property type="match status" value="2"/>
</dbReference>
<dbReference type="PIRSF" id="PIRSF001430">
    <property type="entry name" value="tRNA_psdUrid_synth"/>
    <property type="match status" value="1"/>
</dbReference>
<dbReference type="SUPFAM" id="SSF55120">
    <property type="entry name" value="Pseudouridine synthase"/>
    <property type="match status" value="1"/>
</dbReference>
<evidence type="ECO:0000255" key="1">
    <source>
        <dbReference type="HAMAP-Rule" id="MF_00171"/>
    </source>
</evidence>
<protein>
    <recommendedName>
        <fullName evidence="1">tRNA pseudouridine synthase A</fullName>
        <ecNumber evidence="1">5.4.99.12</ecNumber>
    </recommendedName>
    <alternativeName>
        <fullName evidence="1">tRNA pseudouridine(38-40) synthase</fullName>
    </alternativeName>
    <alternativeName>
        <fullName evidence="1">tRNA pseudouridylate synthase I</fullName>
    </alternativeName>
    <alternativeName>
        <fullName evidence="1">tRNA-uridine isomerase I</fullName>
    </alternativeName>
</protein>
<keyword id="KW-0413">Isomerase</keyword>
<keyword id="KW-1185">Reference proteome</keyword>
<keyword id="KW-0819">tRNA processing</keyword>